<dbReference type="EC" id="7.1.1.-" evidence="1"/>
<dbReference type="EMBL" id="CP000479">
    <property type="protein sequence ID" value="ABK64654.1"/>
    <property type="molecule type" value="Genomic_DNA"/>
</dbReference>
<dbReference type="RefSeq" id="WP_011725831.1">
    <property type="nucleotide sequence ID" value="NC_008595.1"/>
</dbReference>
<dbReference type="SMR" id="A0QJU9"/>
<dbReference type="KEGG" id="mav:MAV_4035"/>
<dbReference type="HOGENOM" id="CLU_042628_4_0_11"/>
<dbReference type="Proteomes" id="UP000001574">
    <property type="component" value="Chromosome"/>
</dbReference>
<dbReference type="GO" id="GO:0005886">
    <property type="term" value="C:plasma membrane"/>
    <property type="evidence" value="ECO:0007669"/>
    <property type="project" value="UniProtKB-SubCell"/>
</dbReference>
<dbReference type="GO" id="GO:0008137">
    <property type="term" value="F:NADH dehydrogenase (ubiquinone) activity"/>
    <property type="evidence" value="ECO:0007669"/>
    <property type="project" value="InterPro"/>
</dbReference>
<dbReference type="GO" id="GO:0050136">
    <property type="term" value="F:NADH:ubiquinone reductase (non-electrogenic) activity"/>
    <property type="evidence" value="ECO:0007669"/>
    <property type="project" value="UniProtKB-UniRule"/>
</dbReference>
<dbReference type="GO" id="GO:0048038">
    <property type="term" value="F:quinone binding"/>
    <property type="evidence" value="ECO:0007669"/>
    <property type="project" value="UniProtKB-KW"/>
</dbReference>
<dbReference type="FunFam" id="3.30.460.80:FF:000006">
    <property type="entry name" value="NADH-quinone oxidoreductase subunit C"/>
    <property type="match status" value="1"/>
</dbReference>
<dbReference type="Gene3D" id="3.30.460.80">
    <property type="entry name" value="NADH:ubiquinone oxidoreductase, 30kDa subunit"/>
    <property type="match status" value="1"/>
</dbReference>
<dbReference type="HAMAP" id="MF_01357">
    <property type="entry name" value="NDH1_NuoC"/>
    <property type="match status" value="1"/>
</dbReference>
<dbReference type="InterPro" id="IPR010218">
    <property type="entry name" value="NADH_DH_suC"/>
</dbReference>
<dbReference type="InterPro" id="IPR037232">
    <property type="entry name" value="NADH_quin_OxRdtase_su_C/D-like"/>
</dbReference>
<dbReference type="InterPro" id="IPR001268">
    <property type="entry name" value="NADH_UbQ_OxRdtase_30kDa_su"/>
</dbReference>
<dbReference type="NCBIfam" id="TIGR01961">
    <property type="entry name" value="NuoC_fam"/>
    <property type="match status" value="1"/>
</dbReference>
<dbReference type="NCBIfam" id="NF005856">
    <property type="entry name" value="PRK07785.1"/>
    <property type="match status" value="1"/>
</dbReference>
<dbReference type="PANTHER" id="PTHR10884:SF14">
    <property type="entry name" value="NADH DEHYDROGENASE [UBIQUINONE] IRON-SULFUR PROTEIN 3, MITOCHONDRIAL"/>
    <property type="match status" value="1"/>
</dbReference>
<dbReference type="PANTHER" id="PTHR10884">
    <property type="entry name" value="NADH DEHYDROGENASE UBIQUINONE IRON-SULFUR PROTEIN 3"/>
    <property type="match status" value="1"/>
</dbReference>
<dbReference type="Pfam" id="PF00329">
    <property type="entry name" value="Complex1_30kDa"/>
    <property type="match status" value="1"/>
</dbReference>
<dbReference type="SUPFAM" id="SSF143243">
    <property type="entry name" value="Nqo5-like"/>
    <property type="match status" value="1"/>
</dbReference>
<comment type="function">
    <text evidence="1">NDH-1 shuttles electrons from NADH, via FMN and iron-sulfur (Fe-S) centers, to quinones in the respiratory chain. The immediate electron acceptor for the enzyme in this species is believed to be a menaquinone. Couples the redox reaction to proton translocation (for every two electrons transferred, four hydrogen ions are translocated across the cytoplasmic membrane), and thus conserves the redox energy in a proton gradient.</text>
</comment>
<comment type="catalytic activity">
    <reaction evidence="1">
        <text>a quinone + NADH + 5 H(+)(in) = a quinol + NAD(+) + 4 H(+)(out)</text>
        <dbReference type="Rhea" id="RHEA:57888"/>
        <dbReference type="ChEBI" id="CHEBI:15378"/>
        <dbReference type="ChEBI" id="CHEBI:24646"/>
        <dbReference type="ChEBI" id="CHEBI:57540"/>
        <dbReference type="ChEBI" id="CHEBI:57945"/>
        <dbReference type="ChEBI" id="CHEBI:132124"/>
    </reaction>
</comment>
<comment type="subunit">
    <text evidence="1">NDH-1 is composed of 14 different subunits. Subunits NuoB, C, D, E, F, and G constitute the peripheral sector of the complex.</text>
</comment>
<comment type="subcellular location">
    <subcellularLocation>
        <location evidence="1">Cell membrane</location>
        <topology evidence="1">Peripheral membrane protein</topology>
        <orientation evidence="1">Cytoplasmic side</orientation>
    </subcellularLocation>
</comment>
<comment type="similarity">
    <text evidence="1">Belongs to the complex I 30 kDa subunit family.</text>
</comment>
<reference key="1">
    <citation type="submission" date="2006-10" db="EMBL/GenBank/DDBJ databases">
        <authorList>
            <person name="Fleischmann R.D."/>
            <person name="Dodson R.J."/>
            <person name="Haft D.H."/>
            <person name="Merkel J.S."/>
            <person name="Nelson W.C."/>
            <person name="Fraser C.M."/>
        </authorList>
    </citation>
    <scope>NUCLEOTIDE SEQUENCE [LARGE SCALE GENOMIC DNA]</scope>
    <source>
        <strain>104</strain>
    </source>
</reference>
<proteinExistence type="inferred from homology"/>
<keyword id="KW-1003">Cell membrane</keyword>
<keyword id="KW-0472">Membrane</keyword>
<keyword id="KW-0520">NAD</keyword>
<keyword id="KW-0874">Quinone</keyword>
<keyword id="KW-1278">Translocase</keyword>
<keyword id="KW-0813">Transport</keyword>
<protein>
    <recommendedName>
        <fullName evidence="1">NADH-quinone oxidoreductase subunit C</fullName>
        <ecNumber evidence="1">7.1.1.-</ecNumber>
    </recommendedName>
    <alternativeName>
        <fullName evidence="1">NADH dehydrogenase I subunit C</fullName>
    </alternativeName>
    <alternativeName>
        <fullName evidence="1">NDH-1 subunit C</fullName>
    </alternativeName>
</protein>
<sequence>MSSPDQDPREAIAQGDDEVIDVRRGMFGAAGTGDTSGYGRLVRTVTLPGSSPRPYGSYFDDVVDTLTESLQSNGIEFHQAIEKVVVYRDELTLHVDRAALPHVAQHLRDDPRLRFEMCLGVSGVHYPHETGRELHAVYPLQSITHNRRVRLEVAVPDGDPHIPSLYRIYPTTDWHERETYDFFGIIFDGHPSLTRIEMPDDWHGHPQRKDYPLGGIPVEYKGAQIPPPDERRAYN</sequence>
<evidence type="ECO:0000255" key="1">
    <source>
        <dbReference type="HAMAP-Rule" id="MF_01357"/>
    </source>
</evidence>
<gene>
    <name evidence="1" type="primary">nuoC</name>
    <name type="ordered locus">MAV_4035</name>
</gene>
<feature type="chain" id="PRO_0000358132" description="NADH-quinone oxidoreductase subunit C">
    <location>
        <begin position="1"/>
        <end position="235"/>
    </location>
</feature>
<accession>A0QJU9</accession>
<name>NUOC_MYCA1</name>
<organism>
    <name type="scientific">Mycobacterium avium (strain 104)</name>
    <dbReference type="NCBI Taxonomy" id="243243"/>
    <lineage>
        <taxon>Bacteria</taxon>
        <taxon>Bacillati</taxon>
        <taxon>Actinomycetota</taxon>
        <taxon>Actinomycetes</taxon>
        <taxon>Mycobacteriales</taxon>
        <taxon>Mycobacteriaceae</taxon>
        <taxon>Mycobacterium</taxon>
        <taxon>Mycobacterium avium complex (MAC)</taxon>
    </lineage>
</organism>